<protein>
    <recommendedName>
        <fullName>Uncharacterized protein Mb0922c</fullName>
    </recommendedName>
</protein>
<feature type="chain" id="PRO_0000103740" description="Uncharacterized protein Mb0922c">
    <location>
        <begin position="1"/>
        <end position="87"/>
    </location>
</feature>
<feature type="region of interest" description="Disordered" evidence="1">
    <location>
        <begin position="67"/>
        <end position="87"/>
    </location>
</feature>
<accession>P64754</accession>
<accession>A0A1R3XWS6</accession>
<accession>Q10566</accession>
<accession>X2BGG5</accession>
<evidence type="ECO:0000256" key="1">
    <source>
        <dbReference type="SAM" id="MobiDB-lite"/>
    </source>
</evidence>
<dbReference type="EMBL" id="LT708304">
    <property type="protein sequence ID" value="SIT99520.1"/>
    <property type="molecule type" value="Genomic_DNA"/>
</dbReference>
<dbReference type="RefSeq" id="NP_854579.1">
    <property type="nucleotide sequence ID" value="NC_002945.3"/>
</dbReference>
<dbReference type="RefSeq" id="WP_003404673.1">
    <property type="nucleotide sequence ID" value="NC_002945.4"/>
</dbReference>
<dbReference type="SMR" id="P64754"/>
<dbReference type="KEGG" id="mbo:BQ2027_MB0922C"/>
<dbReference type="PATRIC" id="fig|233413.5.peg.1003"/>
<dbReference type="Proteomes" id="UP000001419">
    <property type="component" value="Chromosome"/>
</dbReference>
<dbReference type="InterPro" id="IPR020311">
    <property type="entry name" value="Uncharacterised_Rv0898c"/>
</dbReference>
<dbReference type="Pfam" id="PF10944">
    <property type="entry name" value="DUF2630"/>
    <property type="match status" value="1"/>
</dbReference>
<sequence>MGKGRKPTDSETLAHIRDLVAEEKALRAQLRHGGISESEEQQQLRRIEIELDQCWDLLRQRRALRQTGGDPREAVVRPADQVEGYTG</sequence>
<gene>
    <name type="ordered locus">BQ2027_MB0922C</name>
</gene>
<organism>
    <name type="scientific">Mycobacterium bovis (strain ATCC BAA-935 / AF2122/97)</name>
    <dbReference type="NCBI Taxonomy" id="233413"/>
    <lineage>
        <taxon>Bacteria</taxon>
        <taxon>Bacillati</taxon>
        <taxon>Actinomycetota</taxon>
        <taxon>Actinomycetes</taxon>
        <taxon>Mycobacteriales</taxon>
        <taxon>Mycobacteriaceae</taxon>
        <taxon>Mycobacterium</taxon>
        <taxon>Mycobacterium tuberculosis complex</taxon>
    </lineage>
</organism>
<proteinExistence type="predicted"/>
<name>Y922_MYCBO</name>
<keyword id="KW-1185">Reference proteome</keyword>
<reference key="1">
    <citation type="journal article" date="2003" name="Proc. Natl. Acad. Sci. U.S.A.">
        <title>The complete genome sequence of Mycobacterium bovis.</title>
        <authorList>
            <person name="Garnier T."/>
            <person name="Eiglmeier K."/>
            <person name="Camus J.-C."/>
            <person name="Medina N."/>
            <person name="Mansoor H."/>
            <person name="Pryor M."/>
            <person name="Duthoy S."/>
            <person name="Grondin S."/>
            <person name="Lacroix C."/>
            <person name="Monsempe C."/>
            <person name="Simon S."/>
            <person name="Harris B."/>
            <person name="Atkin R."/>
            <person name="Doggett J."/>
            <person name="Mayes R."/>
            <person name="Keating L."/>
            <person name="Wheeler P.R."/>
            <person name="Parkhill J."/>
            <person name="Barrell B.G."/>
            <person name="Cole S.T."/>
            <person name="Gordon S.V."/>
            <person name="Hewinson R.G."/>
        </authorList>
    </citation>
    <scope>NUCLEOTIDE SEQUENCE [LARGE SCALE GENOMIC DNA]</scope>
    <source>
        <strain>ATCC BAA-935 / AF2122/97</strain>
    </source>
</reference>
<reference key="2">
    <citation type="journal article" date="2017" name="Genome Announc.">
        <title>Updated reference genome sequence and annotation of Mycobacterium bovis AF2122/97.</title>
        <authorList>
            <person name="Malone K.M."/>
            <person name="Farrell D."/>
            <person name="Stuber T.P."/>
            <person name="Schubert O.T."/>
            <person name="Aebersold R."/>
            <person name="Robbe-Austerman S."/>
            <person name="Gordon S.V."/>
        </authorList>
    </citation>
    <scope>NUCLEOTIDE SEQUENCE [LARGE SCALE GENOMIC DNA]</scope>
    <scope>GENOME REANNOTATION</scope>
    <source>
        <strain>ATCC BAA-935 / AF2122/97</strain>
    </source>
</reference>